<protein>
    <recommendedName>
        <fullName>NmrA-like family domain-containing protein 1</fullName>
    </recommendedName>
</protein>
<feature type="chain" id="PRO_0000278205" description="NmrA-like family domain-containing protein 1">
    <location>
        <begin position="1"/>
        <end position="309"/>
    </location>
</feature>
<feature type="region of interest" description="Interaction with ASS1" evidence="1">
    <location>
        <begin position="163"/>
        <end position="199"/>
    </location>
</feature>
<feature type="binding site" description="in other chain" evidence="1">
    <location>
        <begin position="11"/>
        <end position="16"/>
    </location>
    <ligand>
        <name>NADP(+)</name>
        <dbReference type="ChEBI" id="CHEBI:58349"/>
        <note>ligand shared between dimeric partners</note>
    </ligand>
</feature>
<feature type="binding site" description="in other chain" evidence="1">
    <location>
        <begin position="37"/>
        <end position="41"/>
    </location>
    <ligand>
        <name>NADP(+)</name>
        <dbReference type="ChEBI" id="CHEBI:58349"/>
        <note>ligand shared between dimeric partners</note>
    </ligand>
</feature>
<feature type="binding site" description="in other chain" evidence="1">
    <location>
        <begin position="58"/>
        <end position="59"/>
    </location>
    <ligand>
        <name>NADP(+)</name>
        <dbReference type="ChEBI" id="CHEBI:58349"/>
        <note>ligand shared between dimeric partners</note>
    </ligand>
</feature>
<feature type="binding site" description="in other chain" evidence="1">
    <location>
        <begin position="79"/>
        <end position="81"/>
    </location>
    <ligand>
        <name>NADP(+)</name>
        <dbReference type="ChEBI" id="CHEBI:58349"/>
        <note>ligand shared between dimeric partners</note>
    </ligand>
</feature>
<feature type="binding site" evidence="1">
    <location>
        <position position="102"/>
    </location>
    <ligand>
        <name>NADP(+)</name>
        <dbReference type="ChEBI" id="CHEBI:58349"/>
        <note>ligand shared between dimeric partners</note>
    </ligand>
</feature>
<feature type="binding site" description="in other chain" evidence="1">
    <location>
        <position position="143"/>
    </location>
    <ligand>
        <name>NADP(+)</name>
        <dbReference type="ChEBI" id="CHEBI:58349"/>
        <note>ligand shared between dimeric partners</note>
    </ligand>
</feature>
<feature type="binding site" description="in other chain" evidence="1">
    <location>
        <begin position="165"/>
        <end position="168"/>
    </location>
    <ligand>
        <name>NADP(+)</name>
        <dbReference type="ChEBI" id="CHEBI:58349"/>
        <note>ligand shared between dimeric partners</note>
    </ligand>
</feature>
<feature type="splice variant" id="VSP_023151" description="In isoform 2 and isoform 3." evidence="2">
    <location>
        <begin position="93"/>
        <end position="102"/>
    </location>
</feature>
<feature type="splice variant" id="VSP_027873" description="In isoform 3." evidence="2">
    <original>LPMGD</original>
    <variation>RLAHG</variation>
    <location>
        <begin position="188"/>
        <end position="192"/>
    </location>
</feature>
<feature type="splice variant" id="VSP_027874" description="In isoform 3." evidence="2">
    <location>
        <begin position="193"/>
        <end position="309"/>
    </location>
</feature>
<feature type="splice variant" id="VSP_023153" description="In isoform 2." evidence="2">
    <original>TTP</original>
    <variation>PVH</variation>
    <location>
        <begin position="251"/>
        <end position="253"/>
    </location>
</feature>
<feature type="splice variant" id="VSP_023154" description="In isoform 2." evidence="2">
    <location>
        <begin position="254"/>
        <end position="309"/>
    </location>
</feature>
<feature type="sequence conflict" description="In Ref. 1; BAB28172." evidence="3" ref="1">
    <original>L</original>
    <variation>M</variation>
    <location>
        <position position="188"/>
    </location>
</feature>
<dbReference type="EMBL" id="AK012340">
    <property type="protein sequence ID" value="BAB28172.1"/>
    <property type="status" value="ALT_FRAME"/>
    <property type="molecule type" value="mRNA"/>
</dbReference>
<dbReference type="EMBL" id="AK078389">
    <property type="protein sequence ID" value="BAC37249.1"/>
    <property type="molecule type" value="mRNA"/>
</dbReference>
<dbReference type="EMBL" id="BC030039">
    <property type="protein sequence ID" value="AAH30039.1"/>
    <property type="molecule type" value="mRNA"/>
</dbReference>
<dbReference type="CCDS" id="CCDS27923.1">
    <molecule id="Q8K2T1-1"/>
</dbReference>
<dbReference type="CCDS" id="CCDS70680.1">
    <molecule id="Q8K2T1-2"/>
</dbReference>
<dbReference type="RefSeq" id="NP_001277690.1">
    <property type="nucleotide sequence ID" value="NM_001290761.1"/>
</dbReference>
<dbReference type="RefSeq" id="NP_001277691.1">
    <property type="nucleotide sequence ID" value="NM_001290762.1"/>
</dbReference>
<dbReference type="RefSeq" id="NP_001277692.1">
    <molecule id="Q8K2T1-2"/>
    <property type="nucleotide sequence ID" value="NM_001290763.1"/>
</dbReference>
<dbReference type="RefSeq" id="NP_080669.1">
    <molecule id="Q8K2T1-1"/>
    <property type="nucleotide sequence ID" value="NM_026393.2"/>
</dbReference>
<dbReference type="SMR" id="Q8K2T1"/>
<dbReference type="BioGRID" id="212461">
    <property type="interactions" value="4"/>
</dbReference>
<dbReference type="FunCoup" id="Q8K2T1">
    <property type="interactions" value="1293"/>
</dbReference>
<dbReference type="IntAct" id="Q8K2T1">
    <property type="interactions" value="2"/>
</dbReference>
<dbReference type="STRING" id="10090.ENSMUSP00000078132"/>
<dbReference type="iPTMnet" id="Q8K2T1"/>
<dbReference type="PhosphoSitePlus" id="Q8K2T1"/>
<dbReference type="REPRODUCTION-2DPAGE" id="IPI00169979"/>
<dbReference type="REPRODUCTION-2DPAGE" id="Q8K2T1"/>
<dbReference type="jPOST" id="Q8K2T1"/>
<dbReference type="PaxDb" id="10090-ENSMUSP00000078132"/>
<dbReference type="PeptideAtlas" id="Q8K2T1"/>
<dbReference type="ProteomicsDB" id="293584">
    <molecule id="Q8K2T1-1"/>
</dbReference>
<dbReference type="ProteomicsDB" id="293585">
    <molecule id="Q8K2T1-2"/>
</dbReference>
<dbReference type="ProteomicsDB" id="293586">
    <molecule id="Q8K2T1-3"/>
</dbReference>
<dbReference type="Pumba" id="Q8K2T1"/>
<dbReference type="Antibodypedia" id="24328">
    <property type="antibodies" value="102 antibodies from 25 providers"/>
</dbReference>
<dbReference type="DNASU" id="67824"/>
<dbReference type="Ensembl" id="ENSMUST00000074970.8">
    <molecule id="Q8K2T1-2"/>
    <property type="protein sequence ID" value="ENSMUSP00000074500.8"/>
    <property type="gene ID" value="ENSMUSG00000063445.15"/>
</dbReference>
<dbReference type="Ensembl" id="ENSMUST00000079130.14">
    <molecule id="Q8K2T1-1"/>
    <property type="protein sequence ID" value="ENSMUSP00000078132.8"/>
    <property type="gene ID" value="ENSMUSG00000063445.15"/>
</dbReference>
<dbReference type="GeneID" id="67824"/>
<dbReference type="KEGG" id="mmu:67824"/>
<dbReference type="UCSC" id="uc007yae.2">
    <molecule id="Q8K2T1-1"/>
    <property type="organism name" value="mouse"/>
</dbReference>
<dbReference type="UCSC" id="uc056zav.1">
    <molecule id="Q8K2T1-2"/>
    <property type="organism name" value="mouse"/>
</dbReference>
<dbReference type="AGR" id="MGI:1915074"/>
<dbReference type="CTD" id="57407"/>
<dbReference type="MGI" id="MGI:1915074">
    <property type="gene designation" value="Nmral1"/>
</dbReference>
<dbReference type="VEuPathDB" id="HostDB:ENSMUSG00000063445"/>
<dbReference type="eggNOG" id="ENOG502RG69">
    <property type="taxonomic scope" value="Eukaryota"/>
</dbReference>
<dbReference type="GeneTree" id="ENSGT00940000160872"/>
<dbReference type="HOGENOM" id="CLU_007383_8_2_1"/>
<dbReference type="InParanoid" id="Q8K2T1"/>
<dbReference type="OrthoDB" id="300709at2759"/>
<dbReference type="PhylomeDB" id="Q8K2T1"/>
<dbReference type="TreeFam" id="TF335532"/>
<dbReference type="Reactome" id="R-MMU-70635">
    <property type="pathway name" value="Urea cycle"/>
</dbReference>
<dbReference type="BioGRID-ORCS" id="67824">
    <property type="hits" value="1 hit in 78 CRISPR screens"/>
</dbReference>
<dbReference type="ChiTaRS" id="Nmral1">
    <property type="organism name" value="mouse"/>
</dbReference>
<dbReference type="PRO" id="PR:Q8K2T1"/>
<dbReference type="Proteomes" id="UP000000589">
    <property type="component" value="Chromosome 16"/>
</dbReference>
<dbReference type="RNAct" id="Q8K2T1">
    <property type="molecule type" value="protein"/>
</dbReference>
<dbReference type="Bgee" id="ENSMUSG00000063445">
    <property type="expression patterns" value="Expressed in manus and 211 other cell types or tissues"/>
</dbReference>
<dbReference type="ExpressionAtlas" id="Q8K2T1">
    <property type="expression patterns" value="baseline and differential"/>
</dbReference>
<dbReference type="GO" id="GO:0005634">
    <property type="term" value="C:nucleus"/>
    <property type="evidence" value="ECO:0007669"/>
    <property type="project" value="UniProtKB-SubCell"/>
</dbReference>
<dbReference type="GO" id="GO:0048471">
    <property type="term" value="C:perinuclear region of cytoplasm"/>
    <property type="evidence" value="ECO:0007669"/>
    <property type="project" value="UniProtKB-SubCell"/>
</dbReference>
<dbReference type="CDD" id="cd05251">
    <property type="entry name" value="NmrA_like_SDR_a"/>
    <property type="match status" value="1"/>
</dbReference>
<dbReference type="FunFam" id="3.40.50.720:FF:000181">
    <property type="entry name" value="NmrA-like family domain-containing protein 1"/>
    <property type="match status" value="1"/>
</dbReference>
<dbReference type="Gene3D" id="3.40.50.720">
    <property type="entry name" value="NAD(P)-binding Rossmann-like Domain"/>
    <property type="match status" value="1"/>
</dbReference>
<dbReference type="Gene3D" id="3.90.25.10">
    <property type="entry name" value="UDP-galactose 4-epimerase, domain 1"/>
    <property type="match status" value="1"/>
</dbReference>
<dbReference type="InterPro" id="IPR036291">
    <property type="entry name" value="NAD(P)-bd_dom_sf"/>
</dbReference>
<dbReference type="InterPro" id="IPR008030">
    <property type="entry name" value="NmrA-like"/>
</dbReference>
<dbReference type="InterPro" id="IPR051164">
    <property type="entry name" value="NmrA-like_oxidored"/>
</dbReference>
<dbReference type="PANTHER" id="PTHR42748">
    <property type="entry name" value="NITROGEN METABOLITE REPRESSION PROTEIN NMRA FAMILY MEMBER"/>
    <property type="match status" value="1"/>
</dbReference>
<dbReference type="PANTHER" id="PTHR42748:SF16">
    <property type="entry name" value="NMRA-LIKE FAMILY DOMAIN-CONTAINING PROTEIN 1"/>
    <property type="match status" value="1"/>
</dbReference>
<dbReference type="Pfam" id="PF05368">
    <property type="entry name" value="NmrA"/>
    <property type="match status" value="1"/>
</dbReference>
<dbReference type="SUPFAM" id="SSF51735">
    <property type="entry name" value="NAD(P)-binding Rossmann-fold domains"/>
    <property type="match status" value="1"/>
</dbReference>
<proteinExistence type="evidence at protein level"/>
<keyword id="KW-0025">Alternative splicing</keyword>
<keyword id="KW-0963">Cytoplasm</keyword>
<keyword id="KW-0903">Direct protein sequencing</keyword>
<keyword id="KW-0521">NADP</keyword>
<keyword id="KW-0539">Nucleus</keyword>
<keyword id="KW-1185">Reference proteome</keyword>
<accession>Q8K2T1</accession>
<accession>Q8BVF0</accession>
<accession>Q9CZP2</accession>
<evidence type="ECO:0000250" key="1"/>
<evidence type="ECO:0000303" key="2">
    <source>
    </source>
</evidence>
<evidence type="ECO:0000305" key="3"/>
<sequence>MADRKLVVVFGATGAQGGSVARALLEDGTFRIRVVTRNPEQRAAKELKQQGAEVVRGDQDDAASMELALAGAHATFIVTNYWETCSQDREVQQPHQWDQVFKQGKLLADLAKRLGLHYVVYSGLENIRKLTAGKLAAGHFDGKGEVEEYFRDIGVPMTSVRLPCYFENLLSYFLPQKAADGKSFLLDLPMGDVPMDGMSVSDLGPVVLSLLKKPEEYVGQNIGLSTCRHTAEEYAALLSKHTGKAVHHAKTTPEDYEKLGFQGAQDLANMFRFYTLKPDRNIHLTLRLNPKAQTLDQWLEQHKGDFAQL</sequence>
<name>NMRL1_MOUSE</name>
<gene>
    <name type="primary">Nmral1</name>
</gene>
<comment type="function">
    <text evidence="1">Redox sensor protein. Undergoes restructuring and subcellular redistribution in response to changes in intracellular NADPH/NADP(+) levels. At low NADPH concentrations the protein is found mainly as a monomer, and binds argininosuccinate synthase (ASS1), the enzyme involved in nitric oxide synthesis. Association with ASS1 impairs its activity and reduces the production of nitric oxide, which subsecuently prevents apoptosis. Under normal NADPH concentrations, the protein is found as a dimer and hides the binding site for ASS1. The homodimer binds one molecule of NADPH. Has higher affinity for NADPH than for NADP(+). Binding to NADPH is necessary to form a stable dimer (By similarity).</text>
</comment>
<comment type="subunit">
    <text evidence="1">Homodimer. Interacts with ASS1. Interaction is enhanced by low NADPH/NADP(+) ratios, which results in inhibition of ASS1 activity (By similarity).</text>
</comment>
<comment type="subcellular location">
    <subcellularLocation>
        <location>Cytoplasm</location>
    </subcellularLocation>
    <subcellularLocation>
        <location>Cytoplasm</location>
        <location>Perinuclear region</location>
    </subcellularLocation>
    <subcellularLocation>
        <location>Nucleus</location>
    </subcellularLocation>
    <text evidence="1">Under normal redox growth conditions localizes in the cytoplasm and perinuclear region. Nuclear localization is promoted by increased intracellular nitric oxide and reduced NADPH/NADP(+) ratios (By similarity).</text>
</comment>
<comment type="alternative products">
    <event type="alternative splicing"/>
    <isoform>
        <id>Q8K2T1-1</id>
        <name>1</name>
        <sequence type="displayed"/>
    </isoform>
    <isoform>
        <id>Q8K2T1-2</id>
        <name>2</name>
        <sequence type="described" ref="VSP_023151 VSP_023153 VSP_023154"/>
    </isoform>
    <isoform>
        <id>Q8K2T1-3</id>
        <name>3</name>
        <sequence type="described" ref="VSP_023151 VSP_027873 VSP_027874"/>
    </isoform>
</comment>
<comment type="similarity">
    <text evidence="3">Belongs to the NmrA-type oxidoreductase family.</text>
</comment>
<comment type="caution">
    <text evidence="3">Lacks the conserved Tyr residue in the active site triad of Ser-Tyr-Lys necessary for dehydrogenase activity, suggesting that it has no oxidoreductase activity.</text>
</comment>
<comment type="sequence caution" evidence="3">
    <conflict type="frameshift">
        <sequence resource="EMBL-CDS" id="BAB28172"/>
    </conflict>
</comment>
<reference key="1">
    <citation type="journal article" date="2005" name="Science">
        <title>The transcriptional landscape of the mammalian genome.</title>
        <authorList>
            <person name="Carninci P."/>
            <person name="Kasukawa T."/>
            <person name="Katayama S."/>
            <person name="Gough J."/>
            <person name="Frith M.C."/>
            <person name="Maeda N."/>
            <person name="Oyama R."/>
            <person name="Ravasi T."/>
            <person name="Lenhard B."/>
            <person name="Wells C."/>
            <person name="Kodzius R."/>
            <person name="Shimokawa K."/>
            <person name="Bajic V.B."/>
            <person name="Brenner S.E."/>
            <person name="Batalov S."/>
            <person name="Forrest A.R."/>
            <person name="Zavolan M."/>
            <person name="Davis M.J."/>
            <person name="Wilming L.G."/>
            <person name="Aidinis V."/>
            <person name="Allen J.E."/>
            <person name="Ambesi-Impiombato A."/>
            <person name="Apweiler R."/>
            <person name="Aturaliya R.N."/>
            <person name="Bailey T.L."/>
            <person name="Bansal M."/>
            <person name="Baxter L."/>
            <person name="Beisel K.W."/>
            <person name="Bersano T."/>
            <person name="Bono H."/>
            <person name="Chalk A.M."/>
            <person name="Chiu K.P."/>
            <person name="Choudhary V."/>
            <person name="Christoffels A."/>
            <person name="Clutterbuck D.R."/>
            <person name="Crowe M.L."/>
            <person name="Dalla E."/>
            <person name="Dalrymple B.P."/>
            <person name="de Bono B."/>
            <person name="Della Gatta G."/>
            <person name="di Bernardo D."/>
            <person name="Down T."/>
            <person name="Engstrom P."/>
            <person name="Fagiolini M."/>
            <person name="Faulkner G."/>
            <person name="Fletcher C.F."/>
            <person name="Fukushima T."/>
            <person name="Furuno M."/>
            <person name="Futaki S."/>
            <person name="Gariboldi M."/>
            <person name="Georgii-Hemming P."/>
            <person name="Gingeras T.R."/>
            <person name="Gojobori T."/>
            <person name="Green R.E."/>
            <person name="Gustincich S."/>
            <person name="Harbers M."/>
            <person name="Hayashi Y."/>
            <person name="Hensch T.K."/>
            <person name="Hirokawa N."/>
            <person name="Hill D."/>
            <person name="Huminiecki L."/>
            <person name="Iacono M."/>
            <person name="Ikeo K."/>
            <person name="Iwama A."/>
            <person name="Ishikawa T."/>
            <person name="Jakt M."/>
            <person name="Kanapin A."/>
            <person name="Katoh M."/>
            <person name="Kawasawa Y."/>
            <person name="Kelso J."/>
            <person name="Kitamura H."/>
            <person name="Kitano H."/>
            <person name="Kollias G."/>
            <person name="Krishnan S.P."/>
            <person name="Kruger A."/>
            <person name="Kummerfeld S.K."/>
            <person name="Kurochkin I.V."/>
            <person name="Lareau L.F."/>
            <person name="Lazarevic D."/>
            <person name="Lipovich L."/>
            <person name="Liu J."/>
            <person name="Liuni S."/>
            <person name="McWilliam S."/>
            <person name="Madan Babu M."/>
            <person name="Madera M."/>
            <person name="Marchionni L."/>
            <person name="Matsuda H."/>
            <person name="Matsuzawa S."/>
            <person name="Miki H."/>
            <person name="Mignone F."/>
            <person name="Miyake S."/>
            <person name="Morris K."/>
            <person name="Mottagui-Tabar S."/>
            <person name="Mulder N."/>
            <person name="Nakano N."/>
            <person name="Nakauchi H."/>
            <person name="Ng P."/>
            <person name="Nilsson R."/>
            <person name="Nishiguchi S."/>
            <person name="Nishikawa S."/>
            <person name="Nori F."/>
            <person name="Ohara O."/>
            <person name="Okazaki Y."/>
            <person name="Orlando V."/>
            <person name="Pang K.C."/>
            <person name="Pavan W.J."/>
            <person name="Pavesi G."/>
            <person name="Pesole G."/>
            <person name="Petrovsky N."/>
            <person name="Piazza S."/>
            <person name="Reed J."/>
            <person name="Reid J.F."/>
            <person name="Ring B.Z."/>
            <person name="Ringwald M."/>
            <person name="Rost B."/>
            <person name="Ruan Y."/>
            <person name="Salzberg S.L."/>
            <person name="Sandelin A."/>
            <person name="Schneider C."/>
            <person name="Schoenbach C."/>
            <person name="Sekiguchi K."/>
            <person name="Semple C.A."/>
            <person name="Seno S."/>
            <person name="Sessa L."/>
            <person name="Sheng Y."/>
            <person name="Shibata Y."/>
            <person name="Shimada H."/>
            <person name="Shimada K."/>
            <person name="Silva D."/>
            <person name="Sinclair B."/>
            <person name="Sperling S."/>
            <person name="Stupka E."/>
            <person name="Sugiura K."/>
            <person name="Sultana R."/>
            <person name="Takenaka Y."/>
            <person name="Taki K."/>
            <person name="Tammoja K."/>
            <person name="Tan S.L."/>
            <person name="Tang S."/>
            <person name="Taylor M.S."/>
            <person name="Tegner J."/>
            <person name="Teichmann S.A."/>
            <person name="Ueda H.R."/>
            <person name="van Nimwegen E."/>
            <person name="Verardo R."/>
            <person name="Wei C.L."/>
            <person name="Yagi K."/>
            <person name="Yamanishi H."/>
            <person name="Zabarovsky E."/>
            <person name="Zhu S."/>
            <person name="Zimmer A."/>
            <person name="Hide W."/>
            <person name="Bult C."/>
            <person name="Grimmond S.M."/>
            <person name="Teasdale R.D."/>
            <person name="Liu E.T."/>
            <person name="Brusic V."/>
            <person name="Quackenbush J."/>
            <person name="Wahlestedt C."/>
            <person name="Mattick J.S."/>
            <person name="Hume D.A."/>
            <person name="Kai C."/>
            <person name="Sasaki D."/>
            <person name="Tomaru Y."/>
            <person name="Fukuda S."/>
            <person name="Kanamori-Katayama M."/>
            <person name="Suzuki M."/>
            <person name="Aoki J."/>
            <person name="Arakawa T."/>
            <person name="Iida J."/>
            <person name="Imamura K."/>
            <person name="Itoh M."/>
            <person name="Kato T."/>
            <person name="Kawaji H."/>
            <person name="Kawagashira N."/>
            <person name="Kawashima T."/>
            <person name="Kojima M."/>
            <person name="Kondo S."/>
            <person name="Konno H."/>
            <person name="Nakano K."/>
            <person name="Ninomiya N."/>
            <person name="Nishio T."/>
            <person name="Okada M."/>
            <person name="Plessy C."/>
            <person name="Shibata K."/>
            <person name="Shiraki T."/>
            <person name="Suzuki S."/>
            <person name="Tagami M."/>
            <person name="Waki K."/>
            <person name="Watahiki A."/>
            <person name="Okamura-Oho Y."/>
            <person name="Suzuki H."/>
            <person name="Kawai J."/>
            <person name="Hayashizaki Y."/>
        </authorList>
    </citation>
    <scope>NUCLEOTIDE SEQUENCE [LARGE SCALE MRNA] (ISOFORMS 2 AND 3)</scope>
    <source>
        <strain>C57BL/6J</strain>
        <tissue>Cerebellum</tissue>
    </source>
</reference>
<reference key="2">
    <citation type="journal article" date="2004" name="Genome Res.">
        <title>The status, quality, and expansion of the NIH full-length cDNA project: the Mammalian Gene Collection (MGC).</title>
        <authorList>
            <consortium name="The MGC Project Team"/>
        </authorList>
    </citation>
    <scope>NUCLEOTIDE SEQUENCE [LARGE SCALE MRNA] (ISOFORM 1)</scope>
    <source>
        <strain>C57BL/6J</strain>
        <tissue>Mammary gland</tissue>
    </source>
</reference>
<reference key="3">
    <citation type="submission" date="2007-03" db="UniProtKB">
        <authorList>
            <person name="Lubec G."/>
            <person name="Klug S."/>
        </authorList>
    </citation>
    <scope>PROTEIN SEQUENCE OF 6-22 AND 114-128</scope>
    <scope>IDENTIFICATION BY MASS SPECTROMETRY</scope>
    <source>
        <tissue>Hippocampus</tissue>
    </source>
</reference>
<reference key="4">
    <citation type="journal article" date="2010" name="Cell">
        <title>A tissue-specific atlas of mouse protein phosphorylation and expression.</title>
        <authorList>
            <person name="Huttlin E.L."/>
            <person name="Jedrychowski M.P."/>
            <person name="Elias J.E."/>
            <person name="Goswami T."/>
            <person name="Rad R."/>
            <person name="Beausoleil S.A."/>
            <person name="Villen J."/>
            <person name="Haas W."/>
            <person name="Sowa M.E."/>
            <person name="Gygi S.P."/>
        </authorList>
    </citation>
    <scope>IDENTIFICATION BY MASS SPECTROMETRY [LARGE SCALE ANALYSIS]</scope>
    <source>
        <tissue>Brain</tissue>
        <tissue>Heart</tissue>
        <tissue>Kidney</tissue>
        <tissue>Liver</tissue>
        <tissue>Lung</tissue>
        <tissue>Pancreas</tissue>
        <tissue>Spleen</tissue>
        <tissue>Testis</tissue>
    </source>
</reference>
<organism>
    <name type="scientific">Mus musculus</name>
    <name type="common">Mouse</name>
    <dbReference type="NCBI Taxonomy" id="10090"/>
    <lineage>
        <taxon>Eukaryota</taxon>
        <taxon>Metazoa</taxon>
        <taxon>Chordata</taxon>
        <taxon>Craniata</taxon>
        <taxon>Vertebrata</taxon>
        <taxon>Euteleostomi</taxon>
        <taxon>Mammalia</taxon>
        <taxon>Eutheria</taxon>
        <taxon>Euarchontoglires</taxon>
        <taxon>Glires</taxon>
        <taxon>Rodentia</taxon>
        <taxon>Myomorpha</taxon>
        <taxon>Muroidea</taxon>
        <taxon>Muridae</taxon>
        <taxon>Murinae</taxon>
        <taxon>Mus</taxon>
        <taxon>Mus</taxon>
    </lineage>
</organism>